<sequence length="305" mass="32769">MAATWYQVTCDVPAQLAETVADYLADLSGCGVCTENRDVDSFSPDDIPELAISQITCYFSLPCRIEQQLAQITGFLAALPGYIPAAPPRVSLLGEEDWASSWKAHFKPLAIGQRLLITPSWETGRQDEGRAVIVLDPGMAFGTGGHETTRLCLECLEGLLVPPPEQLEQIKILDLGTGSGILAIAAAKLGALQIDAVDIDPQAVIVAEENCALNKVADRISCSTTPLEQLGDGYRIILANILAEELVRMAPGIVSRMAPGGSLILSGILAEREALVRNGFDPFPLSFEASLAAGEWRCLHYRRLP</sequence>
<gene>
    <name evidence="1" type="primary">prmA</name>
    <name type="ordered locus">Glov_0996</name>
</gene>
<comment type="function">
    <text evidence="1">Methylates ribosomal protein L11.</text>
</comment>
<comment type="catalytic activity">
    <reaction evidence="1">
        <text>L-lysyl-[protein] + 3 S-adenosyl-L-methionine = N(6),N(6),N(6)-trimethyl-L-lysyl-[protein] + 3 S-adenosyl-L-homocysteine + 3 H(+)</text>
        <dbReference type="Rhea" id="RHEA:54192"/>
        <dbReference type="Rhea" id="RHEA-COMP:9752"/>
        <dbReference type="Rhea" id="RHEA-COMP:13826"/>
        <dbReference type="ChEBI" id="CHEBI:15378"/>
        <dbReference type="ChEBI" id="CHEBI:29969"/>
        <dbReference type="ChEBI" id="CHEBI:57856"/>
        <dbReference type="ChEBI" id="CHEBI:59789"/>
        <dbReference type="ChEBI" id="CHEBI:61961"/>
    </reaction>
</comment>
<comment type="subcellular location">
    <subcellularLocation>
        <location evidence="1">Cytoplasm</location>
    </subcellularLocation>
</comment>
<comment type="similarity">
    <text evidence="1">Belongs to the methyltransferase superfamily. PrmA family.</text>
</comment>
<dbReference type="EC" id="2.1.1.-" evidence="1"/>
<dbReference type="EMBL" id="CP001089">
    <property type="protein sequence ID" value="ACD94719.1"/>
    <property type="molecule type" value="Genomic_DNA"/>
</dbReference>
<dbReference type="RefSeq" id="WP_012469069.1">
    <property type="nucleotide sequence ID" value="NC_010814.1"/>
</dbReference>
<dbReference type="SMR" id="B3E5Z5"/>
<dbReference type="STRING" id="398767.Glov_0996"/>
<dbReference type="KEGG" id="glo:Glov_0996"/>
<dbReference type="eggNOG" id="COG2264">
    <property type="taxonomic scope" value="Bacteria"/>
</dbReference>
<dbReference type="HOGENOM" id="CLU_049382_0_1_7"/>
<dbReference type="OrthoDB" id="9785995at2"/>
<dbReference type="Proteomes" id="UP000002420">
    <property type="component" value="Chromosome"/>
</dbReference>
<dbReference type="GO" id="GO:0005737">
    <property type="term" value="C:cytoplasm"/>
    <property type="evidence" value="ECO:0007669"/>
    <property type="project" value="UniProtKB-SubCell"/>
</dbReference>
<dbReference type="GO" id="GO:0016279">
    <property type="term" value="F:protein-lysine N-methyltransferase activity"/>
    <property type="evidence" value="ECO:0007669"/>
    <property type="project" value="RHEA"/>
</dbReference>
<dbReference type="GO" id="GO:0032259">
    <property type="term" value="P:methylation"/>
    <property type="evidence" value="ECO:0007669"/>
    <property type="project" value="UniProtKB-KW"/>
</dbReference>
<dbReference type="CDD" id="cd02440">
    <property type="entry name" value="AdoMet_MTases"/>
    <property type="match status" value="1"/>
</dbReference>
<dbReference type="Gene3D" id="3.40.50.150">
    <property type="entry name" value="Vaccinia Virus protein VP39"/>
    <property type="match status" value="1"/>
</dbReference>
<dbReference type="HAMAP" id="MF_00735">
    <property type="entry name" value="Methyltr_PrmA"/>
    <property type="match status" value="1"/>
</dbReference>
<dbReference type="InterPro" id="IPR050078">
    <property type="entry name" value="Ribosomal_L11_MeTrfase_PrmA"/>
</dbReference>
<dbReference type="InterPro" id="IPR004498">
    <property type="entry name" value="Ribosomal_PrmA_MeTrfase"/>
</dbReference>
<dbReference type="InterPro" id="IPR029063">
    <property type="entry name" value="SAM-dependent_MTases_sf"/>
</dbReference>
<dbReference type="NCBIfam" id="TIGR00406">
    <property type="entry name" value="prmA"/>
    <property type="match status" value="1"/>
</dbReference>
<dbReference type="PANTHER" id="PTHR43648">
    <property type="entry name" value="ELECTRON TRANSFER FLAVOPROTEIN BETA SUBUNIT LYSINE METHYLTRANSFERASE"/>
    <property type="match status" value="1"/>
</dbReference>
<dbReference type="PANTHER" id="PTHR43648:SF1">
    <property type="entry name" value="ELECTRON TRANSFER FLAVOPROTEIN BETA SUBUNIT LYSINE METHYLTRANSFERASE"/>
    <property type="match status" value="1"/>
</dbReference>
<dbReference type="Pfam" id="PF06325">
    <property type="entry name" value="PrmA"/>
    <property type="match status" value="1"/>
</dbReference>
<dbReference type="PIRSF" id="PIRSF000401">
    <property type="entry name" value="RPL11_MTase"/>
    <property type="match status" value="1"/>
</dbReference>
<dbReference type="SUPFAM" id="SSF53335">
    <property type="entry name" value="S-adenosyl-L-methionine-dependent methyltransferases"/>
    <property type="match status" value="1"/>
</dbReference>
<accession>B3E5Z5</accession>
<keyword id="KW-0963">Cytoplasm</keyword>
<keyword id="KW-0489">Methyltransferase</keyword>
<keyword id="KW-1185">Reference proteome</keyword>
<keyword id="KW-0949">S-adenosyl-L-methionine</keyword>
<keyword id="KW-0808">Transferase</keyword>
<feature type="chain" id="PRO_1000132800" description="Ribosomal protein L11 methyltransferase">
    <location>
        <begin position="1"/>
        <end position="305"/>
    </location>
</feature>
<feature type="binding site" evidence="1">
    <location>
        <position position="149"/>
    </location>
    <ligand>
        <name>S-adenosyl-L-methionine</name>
        <dbReference type="ChEBI" id="CHEBI:59789"/>
    </ligand>
</feature>
<feature type="binding site" evidence="1">
    <location>
        <position position="176"/>
    </location>
    <ligand>
        <name>S-adenosyl-L-methionine</name>
        <dbReference type="ChEBI" id="CHEBI:59789"/>
    </ligand>
</feature>
<feature type="binding site" evidence="1">
    <location>
        <position position="198"/>
    </location>
    <ligand>
        <name>S-adenosyl-L-methionine</name>
        <dbReference type="ChEBI" id="CHEBI:59789"/>
    </ligand>
</feature>
<feature type="binding site" evidence="1">
    <location>
        <position position="240"/>
    </location>
    <ligand>
        <name>S-adenosyl-L-methionine</name>
        <dbReference type="ChEBI" id="CHEBI:59789"/>
    </ligand>
</feature>
<evidence type="ECO:0000255" key="1">
    <source>
        <dbReference type="HAMAP-Rule" id="MF_00735"/>
    </source>
</evidence>
<proteinExistence type="inferred from homology"/>
<reference key="1">
    <citation type="submission" date="2008-05" db="EMBL/GenBank/DDBJ databases">
        <title>Complete sequence of chromosome of Geobacter lovleyi SZ.</title>
        <authorList>
            <consortium name="US DOE Joint Genome Institute"/>
            <person name="Lucas S."/>
            <person name="Copeland A."/>
            <person name="Lapidus A."/>
            <person name="Glavina del Rio T."/>
            <person name="Dalin E."/>
            <person name="Tice H."/>
            <person name="Bruce D."/>
            <person name="Goodwin L."/>
            <person name="Pitluck S."/>
            <person name="Chertkov O."/>
            <person name="Meincke L."/>
            <person name="Brettin T."/>
            <person name="Detter J.C."/>
            <person name="Han C."/>
            <person name="Tapia R."/>
            <person name="Kuske C.R."/>
            <person name="Schmutz J."/>
            <person name="Larimer F."/>
            <person name="Land M."/>
            <person name="Hauser L."/>
            <person name="Kyrpides N."/>
            <person name="Mikhailova N."/>
            <person name="Sung Y."/>
            <person name="Fletcher K.E."/>
            <person name="Ritalahti K.M."/>
            <person name="Loeffler F.E."/>
            <person name="Richardson P."/>
        </authorList>
    </citation>
    <scope>NUCLEOTIDE SEQUENCE [LARGE SCALE GENOMIC DNA]</scope>
    <source>
        <strain>ATCC BAA-1151 / DSM 17278 / SZ</strain>
    </source>
</reference>
<name>PRMA_TRIL1</name>
<organism>
    <name type="scientific">Trichlorobacter lovleyi (strain ATCC BAA-1151 / DSM 17278 / SZ)</name>
    <name type="common">Geobacter lovleyi</name>
    <dbReference type="NCBI Taxonomy" id="398767"/>
    <lineage>
        <taxon>Bacteria</taxon>
        <taxon>Pseudomonadati</taxon>
        <taxon>Thermodesulfobacteriota</taxon>
        <taxon>Desulfuromonadia</taxon>
        <taxon>Geobacterales</taxon>
        <taxon>Geobacteraceae</taxon>
        <taxon>Trichlorobacter</taxon>
    </lineage>
</organism>
<protein>
    <recommendedName>
        <fullName evidence="1">Ribosomal protein L11 methyltransferase</fullName>
        <shortName evidence="1">L11 Mtase</shortName>
        <ecNumber evidence="1">2.1.1.-</ecNumber>
    </recommendedName>
</protein>